<sequence length="195" mass="21751">MPYGTRYPTLAFHTGGVGESDDGMPPQPFETFCYDSALLQAKIENFNIVPYTSVLPKELFGNILPVDQCTKFFKHGAVLEVIMAGRGATVTDGTQAIATGVGICWGKDKNGELIGGWAAEYVEFFPTWIDDEIAESHAKMWLKKSLQHELDLRSVSKHSEFQYFHNYINIRKKFGFCLTALGFLNFENAAPAVIQ</sequence>
<protein>
    <recommendedName>
        <fullName>Pyruvoyl-dependent arginine decarboxylase AaxB</fullName>
        <shortName>PvlArgDC</shortName>
        <ecNumber>4.1.1.19</ecNumber>
    </recommendedName>
    <alternativeName>
        <fullName>Biodegradative arginine decarboxylase</fullName>
    </alternativeName>
    <component>
        <recommendedName>
            <fullName>Pyruvoyl-dependent arginine decarboxylase subunit beta</fullName>
        </recommendedName>
    </component>
    <component>
        <recommendedName>
            <fullName>Pyruvoyl-dependent arginine decarboxylase subunit alpha</fullName>
        </recommendedName>
    </component>
</protein>
<feature type="chain" id="PRO_0000364037" description="Pyruvoyl-dependent arginine decarboxylase subunit beta">
    <location>
        <begin position="1"/>
        <end position="52"/>
    </location>
</feature>
<feature type="chain" id="PRO_0000364038" description="Pyruvoyl-dependent arginine decarboxylase subunit alpha">
    <location>
        <begin position="53"/>
        <end position="195"/>
    </location>
</feature>
<feature type="site" description="Cleavage (non-hydrolytic)" evidence="1">
    <location>
        <begin position="52"/>
        <end position="53"/>
    </location>
</feature>
<feature type="modified residue" description="Pyruvic acid (Ser)" evidence="1">
    <location>
        <position position="53"/>
    </location>
</feature>
<dbReference type="EC" id="4.1.1.19"/>
<dbReference type="EMBL" id="AM884177">
    <property type="status" value="NOT_ANNOTATED_CDS"/>
    <property type="molecule type" value="Genomic_DNA"/>
</dbReference>
<dbReference type="SMR" id="P0C8R5"/>
<dbReference type="Proteomes" id="UP001154401">
    <property type="component" value="Chromosome"/>
</dbReference>
<dbReference type="GO" id="GO:0005737">
    <property type="term" value="C:cytoplasm"/>
    <property type="evidence" value="ECO:0007669"/>
    <property type="project" value="UniProtKB-SubCell"/>
</dbReference>
<dbReference type="GO" id="GO:0008792">
    <property type="term" value="F:arginine decarboxylase activity"/>
    <property type="evidence" value="ECO:0007669"/>
    <property type="project" value="UniProtKB-EC"/>
</dbReference>
<dbReference type="GO" id="GO:0006527">
    <property type="term" value="P:arginine catabolic process"/>
    <property type="evidence" value="ECO:0007669"/>
    <property type="project" value="InterPro"/>
</dbReference>
<dbReference type="Gene3D" id="3.50.20.10">
    <property type="entry name" value="Pyruvoyl-Dependent Histidine Decarboxylase, subunit B"/>
    <property type="match status" value="1"/>
</dbReference>
<dbReference type="InterPro" id="IPR016104">
    <property type="entry name" value="Pyr-dep_his/arg-deCO2ase"/>
</dbReference>
<dbReference type="InterPro" id="IPR016105">
    <property type="entry name" value="Pyr-dep_his/arg-deCO2ase_sand"/>
</dbReference>
<dbReference type="InterPro" id="IPR002724">
    <property type="entry name" value="Pyruvoyl-dep_arg_deCO2ase"/>
</dbReference>
<dbReference type="PANTHER" id="PTHR40438">
    <property type="entry name" value="PYRUVOYL-DEPENDENT ARGININE DECARBOXYLASE"/>
    <property type="match status" value="1"/>
</dbReference>
<dbReference type="PANTHER" id="PTHR40438:SF1">
    <property type="entry name" value="PYRUVOYL-DEPENDENT ARGININE DECARBOXYLASE"/>
    <property type="match status" value="1"/>
</dbReference>
<dbReference type="Pfam" id="PF01862">
    <property type="entry name" value="PvlArgDC"/>
    <property type="match status" value="1"/>
</dbReference>
<dbReference type="SFLD" id="SFLDG01170">
    <property type="entry name" value="Pyruvoyl-dependent_arginine_de"/>
    <property type="match status" value="1"/>
</dbReference>
<dbReference type="SUPFAM" id="SSF56271">
    <property type="entry name" value="Pyruvoyl-dependent histidine and arginine decarboxylases"/>
    <property type="match status" value="1"/>
</dbReference>
<accession>P0C8R5</accession>
<name>AAXB_CHLTB</name>
<reference key="1">
    <citation type="journal article" date="2008" name="Genome Res.">
        <title>Chlamydia trachomatis: genome sequence analysis of lymphogranuloma venereum isolates.</title>
        <authorList>
            <person name="Thomson N.R."/>
            <person name="Holden M.T.G."/>
            <person name="Carder C."/>
            <person name="Lennard N."/>
            <person name="Lockey S.J."/>
            <person name="Marsh P."/>
            <person name="Skipp P."/>
            <person name="O'Connor C.D."/>
            <person name="Goodhead I."/>
            <person name="Norbertzcak H."/>
            <person name="Harris B."/>
            <person name="Ormond D."/>
            <person name="Rance R."/>
            <person name="Quail M.A."/>
            <person name="Parkhill J."/>
            <person name="Stephens R.S."/>
            <person name="Clarke I.N."/>
        </authorList>
    </citation>
    <scope>NUCLEOTIDE SEQUENCE [LARGE SCALE GENOMIC DNA]</scope>
    <source>
        <strain>UCH-1/proctitis</strain>
    </source>
</reference>
<gene>
    <name type="primary">aaxB</name>
    <name type="ordered locus">CTLon_0625</name>
</gene>
<evidence type="ECO:0000250" key="1"/>
<evidence type="ECO:0000305" key="2"/>
<organism>
    <name type="scientific">Chlamydia trachomatis serovar L2b (strain UCH-1/proctitis)</name>
    <dbReference type="NCBI Taxonomy" id="471473"/>
    <lineage>
        <taxon>Bacteria</taxon>
        <taxon>Pseudomonadati</taxon>
        <taxon>Chlamydiota</taxon>
        <taxon>Chlamydiia</taxon>
        <taxon>Chlamydiales</taxon>
        <taxon>Chlamydiaceae</taxon>
        <taxon>Chlamydia/Chlamydophila group</taxon>
        <taxon>Chlamydia</taxon>
    </lineage>
</organism>
<proteinExistence type="inferred from homology"/>
<comment type="function">
    <text evidence="1">Part of the AaxABC system, catalyzes the decarboxylation of L-arginine. The arginine uptake by the bacterium in the macrophage may be a virulence factor against the host innate immune response (By similarity).</text>
</comment>
<comment type="catalytic activity">
    <reaction>
        <text>L-arginine + H(+) = agmatine + CO2</text>
        <dbReference type="Rhea" id="RHEA:17641"/>
        <dbReference type="ChEBI" id="CHEBI:15378"/>
        <dbReference type="ChEBI" id="CHEBI:16526"/>
        <dbReference type="ChEBI" id="CHEBI:32682"/>
        <dbReference type="ChEBI" id="CHEBI:58145"/>
        <dbReference type="EC" id="4.1.1.19"/>
    </reaction>
</comment>
<comment type="cofactor">
    <cofactor evidence="1">
        <name>pyruvate</name>
        <dbReference type="ChEBI" id="CHEBI:15361"/>
    </cofactor>
    <text evidence="1">Binds 1 pyruvoyl group covalently per subunit.</text>
</comment>
<comment type="subunit">
    <text evidence="1">Trimer of an alpha-beta dimer.</text>
</comment>
<comment type="subcellular location">
    <subcellularLocation>
        <location evidence="1">Cytoplasm</location>
    </subcellularLocation>
</comment>
<comment type="similarity">
    <text evidence="2">Belongs to the pyruvoyl-dependent arginine decarboxylase family.</text>
</comment>
<comment type="sequence caution" evidence="2">
    <conflict type="erroneous termination">
        <sequence resource="EMBL" id="AM884177"/>
    </conflict>
    <text>Truncated C-terminus.</text>
</comment>
<keyword id="KW-0963">Cytoplasm</keyword>
<keyword id="KW-0210">Decarboxylase</keyword>
<keyword id="KW-0456">Lyase</keyword>
<keyword id="KW-0670">Pyruvate</keyword>
<keyword id="KW-0843">Virulence</keyword>